<reference key="1">
    <citation type="journal article" date="2003" name="Brain Res. Mol. Brain Res.">
        <title>Molecular cloning and characterization of a novel GABA(B)-related G-protein coupled receptor.</title>
        <authorList>
            <person name="Calver A.R."/>
            <person name="Michalovich D."/>
            <person name="Testa T.T."/>
            <person name="Robbins M.J."/>
            <person name="Jaillard C."/>
            <person name="Hill J."/>
            <person name="Szekeres P.G."/>
            <person name="Charles K.J."/>
            <person name="Jourdain S."/>
            <person name="Holbrook J.D."/>
            <person name="Boyfield I."/>
            <person name="Patel N."/>
            <person name="Medhurst A.D."/>
            <person name="Pangalos M.N."/>
        </authorList>
    </citation>
    <scope>NUCLEOTIDE SEQUENCE [MRNA]</scope>
    <source>
        <strain>BALB/cJ</strain>
    </source>
</reference>
<reference key="2">
    <citation type="journal article" date="2004" name="Genome Res.">
        <title>The status, quality, and expansion of the NIH full-length cDNA project: the Mammalian Gene Collection (MGC).</title>
        <authorList>
            <consortium name="The MGC Project Team"/>
        </authorList>
    </citation>
    <scope>NUCLEOTIDE SEQUENCE [LARGE SCALE MRNA]</scope>
    <source>
        <strain>C57BL/6J</strain>
        <tissue>Brain</tissue>
    </source>
</reference>
<reference key="3">
    <citation type="journal article" date="2021" name="Nat. Commun.">
        <title>EMX2-GPR156-Galphai reverses hair cell orientation in mechanosensory epithelia.</title>
        <authorList>
            <person name="Kindt K.S."/>
            <person name="Akturk A."/>
            <person name="Jarysta A."/>
            <person name="Day M."/>
            <person name="Beirl A."/>
            <person name="Flonard M."/>
            <person name="Tarchini B."/>
        </authorList>
    </citation>
    <scope>FUNCTION</scope>
    <scope>TISSUE SPECIFICITY</scope>
</reference>
<reference key="4">
    <citation type="journal article" date="2023" name="Nat. Med.">
        <title>Genetic association analysis of 77,539 genomes reveals rare disease etiologies.</title>
        <authorList>
            <consortium name="Genomics England Research Consortium"/>
            <person name="Greene D."/>
            <person name="Pirri D."/>
            <person name="Frudd K."/>
            <person name="Sackey E."/>
            <person name="Al-Owain M."/>
            <person name="Giese A.P.J."/>
            <person name="Ramzan K."/>
            <person name="Riaz S."/>
            <person name="Yamanaka I."/>
            <person name="Boeckx N."/>
            <person name="Thys C."/>
            <person name="Gelb B.D."/>
            <person name="Brennan P."/>
            <person name="Hartill V."/>
            <person name="Harvengt J."/>
            <person name="Kosho T."/>
            <person name="Mansour S."/>
            <person name="Masuno M."/>
            <person name="Ohata T."/>
            <person name="Stewart H."/>
            <person name="Taibah K."/>
            <person name="Turner C.L.S."/>
            <person name="Imtiaz F."/>
            <person name="Riazuddin S."/>
            <person name="Morisaki T."/>
            <person name="Ostergaard P."/>
            <person name="Loeys B.L."/>
            <person name="Morisaki H."/>
            <person name="Ahmed Z.M."/>
            <person name="Birdsey G.M."/>
            <person name="Freson K."/>
            <person name="Mumford A."/>
            <person name="Turro E."/>
        </authorList>
    </citation>
    <scope>TISSUE SPECIFICITY</scope>
</reference>
<organism>
    <name type="scientific">Mus musculus</name>
    <name type="common">Mouse</name>
    <dbReference type="NCBI Taxonomy" id="10090"/>
    <lineage>
        <taxon>Eukaryota</taxon>
        <taxon>Metazoa</taxon>
        <taxon>Chordata</taxon>
        <taxon>Craniata</taxon>
        <taxon>Vertebrata</taxon>
        <taxon>Euteleostomi</taxon>
        <taxon>Mammalia</taxon>
        <taxon>Eutheria</taxon>
        <taxon>Euarchontoglires</taxon>
        <taxon>Glires</taxon>
        <taxon>Rodentia</taxon>
        <taxon>Myomorpha</taxon>
        <taxon>Muroidea</taxon>
        <taxon>Muridae</taxon>
        <taxon>Murinae</taxon>
        <taxon>Mus</taxon>
        <taxon>Mus</taxon>
    </lineage>
</organism>
<name>GP156_MOUSE</name>
<sequence length="798" mass="87040">MEPEINCSEFCDSFPGQELDRRPLHDLCKTTITESQHSSTAASPLSPALLGIMWTFLSCGLLLVLFFLAFTIRCRKNRIVKMSSPNLNVVTLLGSCLTYISAYLFGIQDALEGSSVEALIQTRLSLLCIGTSLVFGPILGKSWRLYKVFTQRVPDKRVIIKDLQLLGLVAALVVADVILLVTWVLTDPIQCLQMLGVSMKVTGRDVSCSLTNTHFCASRYSDVWIALVLGCKGLLLLYGAYLAGLTNHVSSPPVNQSLTIMVGVNLLLLTAGLLFVVTRYLHSWPNLVFGLTSGGIFVCTTTVNCCVFIPQLKQWKAFEGENQTMRHMAKYFSTPSKSFHSQFDEDPSCHLRDEKSCMERLLTEKNAVIESLQEQVSNAKEKLVKLMSAECTYDSPEWAVPDAASARGLALPGPSECPAVSENESGAAARDSLHVPAACQHVQGPGASRRDTSPSPAQQDNMPLKQYCDHLDTGCNQKPKAEQSEGPERGDQEPMAPSQRLMADGVACEPHKPRQSPEGLPKKLPGVSSVVREKLQEVLQELDLGSEAPLSPLPCPQQLWKSTTSRSPQKLSPSKLGFSPYVVRRRRAAQRARSHIPGSVGLNVGHQANSTVSSSQSGLIVQNRDSPRLDHHNARSKVPRSSSVKPSPLSEPRRKQGTLEGSKQCETEPQEAGGACNVAFPCQSSASVQAQSPAAPCLPSSPALPRQRQPRPRLSPGCPSLSSGCYNLDSESSSSDEFFCRCHRPYCEICFQSSLDSNDSDTSDSDLEQASGLASWEKLWARSKPVVNFKDDLKPTLV</sequence>
<dbReference type="EMBL" id="AF488740">
    <property type="protein sequence ID" value="AAN03796.1"/>
    <property type="molecule type" value="mRNA"/>
</dbReference>
<dbReference type="EMBL" id="BC059227">
    <property type="protein sequence ID" value="AAH59227.1"/>
    <property type="molecule type" value="mRNA"/>
</dbReference>
<dbReference type="CCDS" id="CCDS28162.1"/>
<dbReference type="RefSeq" id="NP_700443.2">
    <property type="nucleotide sequence ID" value="NM_153394.2"/>
</dbReference>
<dbReference type="SMR" id="Q6PCP7"/>
<dbReference type="FunCoup" id="Q6PCP7">
    <property type="interactions" value="743"/>
</dbReference>
<dbReference type="STRING" id="10090.ENSMUSP00000055958"/>
<dbReference type="GlyCosmos" id="Q6PCP7">
    <property type="glycosylation" value="1 site, No reported glycans"/>
</dbReference>
<dbReference type="GlyGen" id="Q6PCP7">
    <property type="glycosylation" value="1 site"/>
</dbReference>
<dbReference type="iPTMnet" id="Q6PCP7"/>
<dbReference type="PhosphoSitePlus" id="Q6PCP7"/>
<dbReference type="PaxDb" id="10090-ENSMUSP00000055958"/>
<dbReference type="DNASU" id="239845"/>
<dbReference type="GeneID" id="239845"/>
<dbReference type="KEGG" id="mmu:239845"/>
<dbReference type="UCSC" id="uc007zel.1">
    <property type="organism name" value="mouse"/>
</dbReference>
<dbReference type="AGR" id="MGI:2653880"/>
<dbReference type="CTD" id="165829"/>
<dbReference type="MGI" id="MGI:2653880">
    <property type="gene designation" value="Gpr156"/>
</dbReference>
<dbReference type="eggNOG" id="KOG1055">
    <property type="taxonomic scope" value="Eukaryota"/>
</dbReference>
<dbReference type="InParanoid" id="Q6PCP7"/>
<dbReference type="OrthoDB" id="411630at2759"/>
<dbReference type="PhylomeDB" id="Q6PCP7"/>
<dbReference type="TreeFam" id="TF313965"/>
<dbReference type="BioGRID-ORCS" id="239845">
    <property type="hits" value="1 hit in 77 CRISPR screens"/>
</dbReference>
<dbReference type="ChiTaRS" id="Gpr156">
    <property type="organism name" value="mouse"/>
</dbReference>
<dbReference type="PRO" id="PR:Q6PCP7"/>
<dbReference type="Proteomes" id="UP000000589">
    <property type="component" value="Unplaced"/>
</dbReference>
<dbReference type="RNAct" id="Q6PCP7">
    <property type="molecule type" value="protein"/>
</dbReference>
<dbReference type="GO" id="GO:0005886">
    <property type="term" value="C:plasma membrane"/>
    <property type="evidence" value="ECO:0000314"/>
    <property type="project" value="MGI"/>
</dbReference>
<dbReference type="GO" id="GO:0045211">
    <property type="term" value="C:postsynaptic membrane"/>
    <property type="evidence" value="ECO:0007669"/>
    <property type="project" value="UniProtKB-SubCell"/>
</dbReference>
<dbReference type="GO" id="GO:0004965">
    <property type="term" value="F:G protein-coupled GABA receptor activity"/>
    <property type="evidence" value="ECO:0007669"/>
    <property type="project" value="InterPro"/>
</dbReference>
<dbReference type="GO" id="GO:0160194">
    <property type="term" value="P:stereocilium bundle organization"/>
    <property type="evidence" value="ECO:0000315"/>
    <property type="project" value="UniProtKB"/>
</dbReference>
<dbReference type="CDD" id="cd15292">
    <property type="entry name" value="7tmC_GPR156"/>
    <property type="match status" value="1"/>
</dbReference>
<dbReference type="InterPro" id="IPR002455">
    <property type="entry name" value="GPCR3_GABA-B"/>
</dbReference>
<dbReference type="InterPro" id="IPR017978">
    <property type="entry name" value="GPCR_3_C"/>
</dbReference>
<dbReference type="InterPro" id="IPR041946">
    <property type="entry name" value="GPR156_7TM"/>
</dbReference>
<dbReference type="PANTHER" id="PTHR10519:SF20">
    <property type="entry name" value="G-PROTEIN COUPLED RECEPTOR 156-RELATED"/>
    <property type="match status" value="1"/>
</dbReference>
<dbReference type="PANTHER" id="PTHR10519">
    <property type="entry name" value="GABA-B RECEPTOR"/>
    <property type="match status" value="1"/>
</dbReference>
<dbReference type="Pfam" id="PF00003">
    <property type="entry name" value="7tm_3"/>
    <property type="match status" value="1"/>
</dbReference>
<dbReference type="PRINTS" id="PR01176">
    <property type="entry name" value="GABABRECEPTR"/>
</dbReference>
<dbReference type="PROSITE" id="PS50259">
    <property type="entry name" value="G_PROTEIN_RECEP_F3_4"/>
    <property type="match status" value="1"/>
</dbReference>
<accession>Q6PCP7</accession>
<accession>Q8K452</accession>
<keyword id="KW-1003">Cell membrane</keyword>
<keyword id="KW-0175">Coiled coil</keyword>
<keyword id="KW-0297">G-protein coupled receptor</keyword>
<keyword id="KW-0325">Glycoprotein</keyword>
<keyword id="KW-0472">Membrane</keyword>
<keyword id="KW-0628">Postsynaptic cell membrane</keyword>
<keyword id="KW-0675">Receptor</keyword>
<keyword id="KW-1185">Reference proteome</keyword>
<keyword id="KW-0770">Synapse</keyword>
<keyword id="KW-0807">Transducer</keyword>
<keyword id="KW-0812">Transmembrane</keyword>
<keyword id="KW-1133">Transmembrane helix</keyword>
<comment type="function">
    <text evidence="3">Orphan G-protein coupled receptor involved in the regulation of hair cell orientation in mechanosensory organs of the inner ear. It is required to trigger a 180 degree reversal in hair cell orientation, creating a virtual line of polarity reversal (LPR) across which stereociliary bundles are arranged in opposite orientations.</text>
</comment>
<comment type="subcellular location">
    <subcellularLocation>
        <location>Cell membrane</location>
        <topology>Multi-pass membrane protein</topology>
    </subcellularLocation>
    <subcellularLocation>
        <location>Postsynaptic cell membrane</location>
        <topology>Multi-pass membrane protein</topology>
    </subcellularLocation>
</comment>
<comment type="tissue specificity">
    <text evidence="3 4">Expressed in the outer and inner hair cells of the organ of Corti (at protein level) (PubMed:36928819). Expressed in the utricle and saccule within the vestibule (at protein level) (PubMed:34001891).</text>
</comment>
<comment type="similarity">
    <text evidence="5">Belongs to the G-protein coupled receptor 3 family. GABA-B receptor subfamily.</text>
</comment>
<protein>
    <recommendedName>
        <fullName>Probable G-protein coupled receptor 156</fullName>
    </recommendedName>
    <alternativeName>
        <fullName>GABAB-related G-protein coupled receptor</fullName>
    </alternativeName>
</protein>
<gene>
    <name type="primary">Gpr156</name>
    <name type="synonym">Gababl</name>
</gene>
<proteinExistence type="evidence at protein level"/>
<evidence type="ECO:0000255" key="1"/>
<evidence type="ECO:0000256" key="2">
    <source>
        <dbReference type="SAM" id="MobiDB-lite"/>
    </source>
</evidence>
<evidence type="ECO:0000269" key="3">
    <source>
    </source>
</evidence>
<evidence type="ECO:0000269" key="4">
    <source>
    </source>
</evidence>
<evidence type="ECO:0000305" key="5"/>
<feature type="chain" id="PRO_0000206900" description="Probable G-protein coupled receptor 156">
    <location>
        <begin position="1"/>
        <end position="798"/>
    </location>
</feature>
<feature type="topological domain" description="Extracellular" evidence="1">
    <location>
        <begin position="1"/>
        <end position="49"/>
    </location>
</feature>
<feature type="transmembrane region" description="Helical; Name=1" evidence="1">
    <location>
        <begin position="50"/>
        <end position="70"/>
    </location>
</feature>
<feature type="topological domain" description="Cytoplasmic" evidence="1">
    <location>
        <begin position="71"/>
        <end position="86"/>
    </location>
</feature>
<feature type="transmembrane region" description="Helical; Name=2" evidence="1">
    <location>
        <begin position="87"/>
        <end position="107"/>
    </location>
</feature>
<feature type="topological domain" description="Extracellular" evidence="1">
    <location>
        <begin position="108"/>
        <end position="118"/>
    </location>
</feature>
<feature type="transmembrane region" description="Helical; Name=3" evidence="1">
    <location>
        <begin position="119"/>
        <end position="139"/>
    </location>
</feature>
<feature type="topological domain" description="Cytoplasmic" evidence="1">
    <location>
        <begin position="140"/>
        <end position="164"/>
    </location>
</feature>
<feature type="transmembrane region" description="Helical; Name=4" evidence="1">
    <location>
        <begin position="165"/>
        <end position="185"/>
    </location>
</feature>
<feature type="topological domain" description="Extracellular" evidence="1">
    <location>
        <begin position="186"/>
        <end position="222"/>
    </location>
</feature>
<feature type="transmembrane region" description="Helical; Name=5" evidence="1">
    <location>
        <begin position="223"/>
        <end position="243"/>
    </location>
</feature>
<feature type="topological domain" description="Cytoplasmic" evidence="1">
    <location>
        <begin position="244"/>
        <end position="257"/>
    </location>
</feature>
<feature type="transmembrane region" description="Helical; Name=6" evidence="1">
    <location>
        <begin position="258"/>
        <end position="278"/>
    </location>
</feature>
<feature type="topological domain" description="Extracellular" evidence="1">
    <location>
        <begin position="279"/>
        <end position="288"/>
    </location>
</feature>
<feature type="transmembrane region" description="Helical; Name=7" evidence="1">
    <location>
        <begin position="289"/>
        <end position="309"/>
    </location>
</feature>
<feature type="topological domain" description="Cytoplasmic" evidence="1">
    <location>
        <begin position="310"/>
        <end position="798"/>
    </location>
</feature>
<feature type="region of interest" description="Disordered" evidence="2">
    <location>
        <begin position="441"/>
        <end position="497"/>
    </location>
</feature>
<feature type="region of interest" description="Disordered" evidence="2">
    <location>
        <begin position="546"/>
        <end position="666"/>
    </location>
</feature>
<feature type="region of interest" description="Disordered" evidence="2">
    <location>
        <begin position="693"/>
        <end position="715"/>
    </location>
</feature>
<feature type="coiled-coil region" evidence="1">
    <location>
        <begin position="353"/>
        <end position="390"/>
    </location>
</feature>
<feature type="compositionally biased region" description="Basic and acidic residues" evidence="2">
    <location>
        <begin position="479"/>
        <end position="492"/>
    </location>
</feature>
<feature type="compositionally biased region" description="Polar residues" evidence="2">
    <location>
        <begin position="559"/>
        <end position="572"/>
    </location>
</feature>
<feature type="compositionally biased region" description="Basic residues" evidence="2">
    <location>
        <begin position="583"/>
        <end position="594"/>
    </location>
</feature>
<feature type="compositionally biased region" description="Polar residues" evidence="2">
    <location>
        <begin position="606"/>
        <end position="624"/>
    </location>
</feature>
<feature type="compositionally biased region" description="Low complexity" evidence="2">
    <location>
        <begin position="639"/>
        <end position="648"/>
    </location>
</feature>
<feature type="glycosylation site" description="N-linked (GlcNAc...) asparagine" evidence="1">
    <location>
        <position position="6"/>
    </location>
</feature>
<feature type="sequence conflict" description="In Ref. 2; AAH59227." evidence="5" ref="2">
    <original>S</original>
    <variation>G</variation>
    <location>
        <position position="341"/>
    </location>
</feature>
<feature type="sequence conflict" description="In Ref. 1; AAN03796." evidence="5" ref="1">
    <original>S</original>
    <variation>R</variation>
    <location>
        <position position="484"/>
    </location>
</feature>
<feature type="sequence conflict" description="In Ref. 1; AAN03796." evidence="5" ref="1">
    <original>Q</original>
    <variation>R</variation>
    <location>
        <position position="569"/>
    </location>
</feature>
<feature type="sequence conflict" description="In Ref. 1; AAN03796." evidence="5" ref="1">
    <original>P</original>
    <variation>T</variation>
    <location>
        <position position="573"/>
    </location>
</feature>
<feature type="sequence conflict" description="In Ref. 1; AAN03796." evidence="5" ref="1">
    <original>V</original>
    <variation>I</variation>
    <location>
        <position position="621"/>
    </location>
</feature>
<feature type="sequence conflict" description="In Ref. 1; AAN03796." evidence="5" ref="1">
    <original>L</original>
    <variation>Q</variation>
    <location>
        <position position="629"/>
    </location>
</feature>
<feature type="sequence conflict" description="In Ref. 2; AAH59227." evidence="5" ref="2">
    <original>H</original>
    <variation>N</variation>
    <location>
        <position position="632"/>
    </location>
</feature>
<feature type="sequence conflict" description="In Ref. 2; AAH59227." evidence="5" ref="2">
    <original>E</original>
    <variation>G</variation>
    <location>
        <position position="777"/>
    </location>
</feature>